<name>SYC_CLAM3</name>
<dbReference type="EC" id="6.1.1.16" evidence="1"/>
<dbReference type="EMBL" id="AM711867">
    <property type="protein sequence ID" value="CAN02569.1"/>
    <property type="molecule type" value="Genomic_DNA"/>
</dbReference>
<dbReference type="RefSeq" id="WP_012039176.1">
    <property type="nucleotide sequence ID" value="NC_009480.1"/>
</dbReference>
<dbReference type="SMR" id="A5CTY3"/>
<dbReference type="KEGG" id="cmi:CMM_2488"/>
<dbReference type="eggNOG" id="COG0215">
    <property type="taxonomic scope" value="Bacteria"/>
</dbReference>
<dbReference type="HOGENOM" id="CLU_013528_0_1_11"/>
<dbReference type="OrthoDB" id="9815130at2"/>
<dbReference type="Proteomes" id="UP000001564">
    <property type="component" value="Chromosome"/>
</dbReference>
<dbReference type="GO" id="GO:0005829">
    <property type="term" value="C:cytosol"/>
    <property type="evidence" value="ECO:0007669"/>
    <property type="project" value="TreeGrafter"/>
</dbReference>
<dbReference type="GO" id="GO:0005524">
    <property type="term" value="F:ATP binding"/>
    <property type="evidence" value="ECO:0007669"/>
    <property type="project" value="UniProtKB-UniRule"/>
</dbReference>
<dbReference type="GO" id="GO:0004817">
    <property type="term" value="F:cysteine-tRNA ligase activity"/>
    <property type="evidence" value="ECO:0007669"/>
    <property type="project" value="UniProtKB-UniRule"/>
</dbReference>
<dbReference type="GO" id="GO:0008270">
    <property type="term" value="F:zinc ion binding"/>
    <property type="evidence" value="ECO:0007669"/>
    <property type="project" value="UniProtKB-UniRule"/>
</dbReference>
<dbReference type="GO" id="GO:0006423">
    <property type="term" value="P:cysteinyl-tRNA aminoacylation"/>
    <property type="evidence" value="ECO:0007669"/>
    <property type="project" value="UniProtKB-UniRule"/>
</dbReference>
<dbReference type="CDD" id="cd00672">
    <property type="entry name" value="CysRS_core"/>
    <property type="match status" value="1"/>
</dbReference>
<dbReference type="FunFam" id="3.40.50.620:FF:000068">
    <property type="entry name" value="Cysteine--tRNA ligase"/>
    <property type="match status" value="1"/>
</dbReference>
<dbReference type="Gene3D" id="1.20.120.1910">
    <property type="entry name" value="Cysteine-tRNA ligase, C-terminal anti-codon recognition domain"/>
    <property type="match status" value="1"/>
</dbReference>
<dbReference type="Gene3D" id="3.40.50.620">
    <property type="entry name" value="HUPs"/>
    <property type="match status" value="1"/>
</dbReference>
<dbReference type="HAMAP" id="MF_00041">
    <property type="entry name" value="Cys_tRNA_synth"/>
    <property type="match status" value="1"/>
</dbReference>
<dbReference type="InterPro" id="IPR015803">
    <property type="entry name" value="Cys-tRNA-ligase"/>
</dbReference>
<dbReference type="InterPro" id="IPR015273">
    <property type="entry name" value="Cys-tRNA-synt_Ia_DALR"/>
</dbReference>
<dbReference type="InterPro" id="IPR024909">
    <property type="entry name" value="Cys-tRNA/MSH_ligase"/>
</dbReference>
<dbReference type="InterPro" id="IPR056411">
    <property type="entry name" value="CysS_C"/>
</dbReference>
<dbReference type="InterPro" id="IPR014729">
    <property type="entry name" value="Rossmann-like_a/b/a_fold"/>
</dbReference>
<dbReference type="InterPro" id="IPR032678">
    <property type="entry name" value="tRNA-synt_1_cat_dom"/>
</dbReference>
<dbReference type="InterPro" id="IPR009080">
    <property type="entry name" value="tRNAsynth_Ia_anticodon-bd"/>
</dbReference>
<dbReference type="NCBIfam" id="TIGR00435">
    <property type="entry name" value="cysS"/>
    <property type="match status" value="1"/>
</dbReference>
<dbReference type="PANTHER" id="PTHR10890:SF30">
    <property type="entry name" value="CYSTEINE--TRNA LIGASE"/>
    <property type="match status" value="1"/>
</dbReference>
<dbReference type="PANTHER" id="PTHR10890">
    <property type="entry name" value="CYSTEINYL-TRNA SYNTHETASE"/>
    <property type="match status" value="1"/>
</dbReference>
<dbReference type="Pfam" id="PF23493">
    <property type="entry name" value="CysS_C"/>
    <property type="match status" value="1"/>
</dbReference>
<dbReference type="Pfam" id="PF09190">
    <property type="entry name" value="DALR_2"/>
    <property type="match status" value="1"/>
</dbReference>
<dbReference type="Pfam" id="PF01406">
    <property type="entry name" value="tRNA-synt_1e"/>
    <property type="match status" value="1"/>
</dbReference>
<dbReference type="PRINTS" id="PR00983">
    <property type="entry name" value="TRNASYNTHCYS"/>
</dbReference>
<dbReference type="SMART" id="SM00840">
    <property type="entry name" value="DALR_2"/>
    <property type="match status" value="1"/>
</dbReference>
<dbReference type="SUPFAM" id="SSF47323">
    <property type="entry name" value="Anticodon-binding domain of a subclass of class I aminoacyl-tRNA synthetases"/>
    <property type="match status" value="1"/>
</dbReference>
<dbReference type="SUPFAM" id="SSF52374">
    <property type="entry name" value="Nucleotidylyl transferase"/>
    <property type="match status" value="1"/>
</dbReference>
<proteinExistence type="inferred from homology"/>
<accession>A5CTY3</accession>
<protein>
    <recommendedName>
        <fullName evidence="1">Cysteine--tRNA ligase</fullName>
        <ecNumber evidence="1">6.1.1.16</ecNumber>
    </recommendedName>
    <alternativeName>
        <fullName evidence="1">Cysteinyl-tRNA synthetase</fullName>
        <shortName evidence="1">CysRS</shortName>
    </alternativeName>
</protein>
<gene>
    <name evidence="1" type="primary">cysS</name>
    <name type="ordered locus">CMM_2488</name>
</gene>
<evidence type="ECO:0000255" key="1">
    <source>
        <dbReference type="HAMAP-Rule" id="MF_00041"/>
    </source>
</evidence>
<sequence>MTLRLHDSRTQSLRDFVPLVDGRVGIYVCGPTVQSAPHIGHLRSALAYDQLRRWLTHRGLDVTLVRNVTDIDDKVIDNARRGQEAGGTEEWWALAYRVELEFSRAYSALGILPPSYEPRATASIGEMQEIIRRLVERGHAYAADDRSGDVYFDTASWPEYGELTRQRAADMEAAADADPRAKRDVRDFALWKGAKPGEPASASWPSPWGSGRPGWHIECSAMSTRYLGAEFDIHGGGLDLRFPHHENELAQSRAAGDPFARYWLHNGLVAVAGQKMSKSLGNSLFAADLLASARPVVVRYFLGSAHYRSTLEFHDGALAEAEAALDRIETFLDRSARRLAGTRFQAAPAAPDGSPAAVPDEFAEAMDDDLSVPQALAVLHDAVRAGNAALDAGDLQEAASLRADVSAMVAVLGIDPLADEWRTASDQPARRALQALVEHRIAERQTAREARDFALADRIRQELAEAGITIEDSPGGSHWSIDGE</sequence>
<keyword id="KW-0030">Aminoacyl-tRNA synthetase</keyword>
<keyword id="KW-0067">ATP-binding</keyword>
<keyword id="KW-0963">Cytoplasm</keyword>
<keyword id="KW-0436">Ligase</keyword>
<keyword id="KW-0479">Metal-binding</keyword>
<keyword id="KW-0547">Nucleotide-binding</keyword>
<keyword id="KW-0648">Protein biosynthesis</keyword>
<keyword id="KW-0862">Zinc</keyword>
<feature type="chain" id="PRO_1000006581" description="Cysteine--tRNA ligase">
    <location>
        <begin position="1"/>
        <end position="484"/>
    </location>
</feature>
<feature type="short sequence motif" description="'HIGH' region">
    <location>
        <begin position="31"/>
        <end position="41"/>
    </location>
</feature>
<feature type="short sequence motif" description="'KMSKS' region">
    <location>
        <begin position="275"/>
        <end position="279"/>
    </location>
</feature>
<feature type="binding site" evidence="1">
    <location>
        <position position="29"/>
    </location>
    <ligand>
        <name>Zn(2+)</name>
        <dbReference type="ChEBI" id="CHEBI:29105"/>
    </ligand>
</feature>
<feature type="binding site" evidence="1">
    <location>
        <position position="219"/>
    </location>
    <ligand>
        <name>Zn(2+)</name>
        <dbReference type="ChEBI" id="CHEBI:29105"/>
    </ligand>
</feature>
<feature type="binding site" evidence="1">
    <location>
        <position position="244"/>
    </location>
    <ligand>
        <name>Zn(2+)</name>
        <dbReference type="ChEBI" id="CHEBI:29105"/>
    </ligand>
</feature>
<feature type="binding site" evidence="1">
    <location>
        <position position="248"/>
    </location>
    <ligand>
        <name>Zn(2+)</name>
        <dbReference type="ChEBI" id="CHEBI:29105"/>
    </ligand>
</feature>
<feature type="binding site" evidence="1">
    <location>
        <position position="278"/>
    </location>
    <ligand>
        <name>ATP</name>
        <dbReference type="ChEBI" id="CHEBI:30616"/>
    </ligand>
</feature>
<comment type="catalytic activity">
    <reaction evidence="1">
        <text>tRNA(Cys) + L-cysteine + ATP = L-cysteinyl-tRNA(Cys) + AMP + diphosphate</text>
        <dbReference type="Rhea" id="RHEA:17773"/>
        <dbReference type="Rhea" id="RHEA-COMP:9661"/>
        <dbReference type="Rhea" id="RHEA-COMP:9679"/>
        <dbReference type="ChEBI" id="CHEBI:30616"/>
        <dbReference type="ChEBI" id="CHEBI:33019"/>
        <dbReference type="ChEBI" id="CHEBI:35235"/>
        <dbReference type="ChEBI" id="CHEBI:78442"/>
        <dbReference type="ChEBI" id="CHEBI:78517"/>
        <dbReference type="ChEBI" id="CHEBI:456215"/>
        <dbReference type="EC" id="6.1.1.16"/>
    </reaction>
</comment>
<comment type="cofactor">
    <cofactor evidence="1">
        <name>Zn(2+)</name>
        <dbReference type="ChEBI" id="CHEBI:29105"/>
    </cofactor>
    <text evidence="1">Binds 1 zinc ion per subunit.</text>
</comment>
<comment type="subunit">
    <text evidence="1">Monomer.</text>
</comment>
<comment type="subcellular location">
    <subcellularLocation>
        <location evidence="1">Cytoplasm</location>
    </subcellularLocation>
</comment>
<comment type="similarity">
    <text evidence="1">Belongs to the class-I aminoacyl-tRNA synthetase family.</text>
</comment>
<reference key="1">
    <citation type="journal article" date="2008" name="J. Bacteriol.">
        <title>The genome sequence of the tomato-pathogenic actinomycete Clavibacter michiganensis subsp. michiganensis NCPPB382 reveals a large island involved in pathogenicity.</title>
        <authorList>
            <person name="Gartemann K.-H."/>
            <person name="Abt B."/>
            <person name="Bekel T."/>
            <person name="Burger A."/>
            <person name="Engemann J."/>
            <person name="Fluegel M."/>
            <person name="Gaigalat L."/>
            <person name="Goesmann A."/>
            <person name="Graefen I."/>
            <person name="Kalinowski J."/>
            <person name="Kaup O."/>
            <person name="Kirchner O."/>
            <person name="Krause L."/>
            <person name="Linke B."/>
            <person name="McHardy A."/>
            <person name="Meyer F."/>
            <person name="Pohle S."/>
            <person name="Rueckert C."/>
            <person name="Schneiker S."/>
            <person name="Zellermann E.-M."/>
            <person name="Puehler A."/>
            <person name="Eichenlaub R."/>
            <person name="Kaiser O."/>
            <person name="Bartels D."/>
        </authorList>
    </citation>
    <scope>NUCLEOTIDE SEQUENCE [LARGE SCALE GENOMIC DNA]</scope>
    <source>
        <strain>NCPPB 382</strain>
    </source>
</reference>
<organism>
    <name type="scientific">Clavibacter michiganensis subsp. michiganensis (strain NCPPB 382)</name>
    <dbReference type="NCBI Taxonomy" id="443906"/>
    <lineage>
        <taxon>Bacteria</taxon>
        <taxon>Bacillati</taxon>
        <taxon>Actinomycetota</taxon>
        <taxon>Actinomycetes</taxon>
        <taxon>Micrococcales</taxon>
        <taxon>Microbacteriaceae</taxon>
        <taxon>Clavibacter</taxon>
    </lineage>
</organism>